<organism>
    <name type="scientific">Actinobacillus pleuropneumoniae serotype 7 (strain AP76)</name>
    <dbReference type="NCBI Taxonomy" id="537457"/>
    <lineage>
        <taxon>Bacteria</taxon>
        <taxon>Pseudomonadati</taxon>
        <taxon>Pseudomonadota</taxon>
        <taxon>Gammaproteobacteria</taxon>
        <taxon>Pasteurellales</taxon>
        <taxon>Pasteurellaceae</taxon>
        <taxon>Actinobacillus</taxon>
    </lineage>
</organism>
<protein>
    <recommendedName>
        <fullName evidence="1">Bifunctional protein FolD</fullName>
    </recommendedName>
    <domain>
        <recommendedName>
            <fullName evidence="1">Methylenetetrahydrofolate dehydrogenase</fullName>
            <ecNumber evidence="1">1.5.1.5</ecNumber>
        </recommendedName>
    </domain>
    <domain>
        <recommendedName>
            <fullName evidence="1">Methenyltetrahydrofolate cyclohydrolase</fullName>
            <ecNumber evidence="1">3.5.4.9</ecNumber>
        </recommendedName>
    </domain>
</protein>
<sequence>MTAHIISGTAVAKQVKANIAEQIQAYTAQDKRKPGLAVILVGMDPASQVYVNSKRKSCAEIGIESKSYDLPAETGEAELLAIIEQLNHDDSVDGILVQLPLPKQIDATKVTEAIVPHKDVDGFHPYNVGRLCQKIPTLRSCTPYGVMKLLESTGVNLAGLHAVVVGASNIVGRPMAMELLLAGCTVTVTHSRTKDLAYHVSQADIVVAGVGKPNFVKGEWIKPGAIVIDVGINRVEGKLIGDVEYSAAEAKASFITPVPGGVGPMTVAMLMQNTLQAYQVHLQAV</sequence>
<proteinExistence type="inferred from homology"/>
<gene>
    <name evidence="1" type="primary">folD</name>
    <name type="ordered locus">APP7_0956</name>
</gene>
<accession>B3GXP3</accession>
<keyword id="KW-0028">Amino-acid biosynthesis</keyword>
<keyword id="KW-0368">Histidine biosynthesis</keyword>
<keyword id="KW-0378">Hydrolase</keyword>
<keyword id="KW-0486">Methionine biosynthesis</keyword>
<keyword id="KW-0511">Multifunctional enzyme</keyword>
<keyword id="KW-0521">NADP</keyword>
<keyword id="KW-0554">One-carbon metabolism</keyword>
<keyword id="KW-0560">Oxidoreductase</keyword>
<keyword id="KW-0658">Purine biosynthesis</keyword>
<comment type="function">
    <text evidence="1">Catalyzes the oxidation of 5,10-methylenetetrahydrofolate to 5,10-methenyltetrahydrofolate and then the hydrolysis of 5,10-methenyltetrahydrofolate to 10-formyltetrahydrofolate.</text>
</comment>
<comment type="catalytic activity">
    <reaction evidence="1">
        <text>(6R)-5,10-methylene-5,6,7,8-tetrahydrofolate + NADP(+) = (6R)-5,10-methenyltetrahydrofolate + NADPH</text>
        <dbReference type="Rhea" id="RHEA:22812"/>
        <dbReference type="ChEBI" id="CHEBI:15636"/>
        <dbReference type="ChEBI" id="CHEBI:57455"/>
        <dbReference type="ChEBI" id="CHEBI:57783"/>
        <dbReference type="ChEBI" id="CHEBI:58349"/>
        <dbReference type="EC" id="1.5.1.5"/>
    </reaction>
</comment>
<comment type="catalytic activity">
    <reaction evidence="1">
        <text>(6R)-5,10-methenyltetrahydrofolate + H2O = (6R)-10-formyltetrahydrofolate + H(+)</text>
        <dbReference type="Rhea" id="RHEA:23700"/>
        <dbReference type="ChEBI" id="CHEBI:15377"/>
        <dbReference type="ChEBI" id="CHEBI:15378"/>
        <dbReference type="ChEBI" id="CHEBI:57455"/>
        <dbReference type="ChEBI" id="CHEBI:195366"/>
        <dbReference type="EC" id="3.5.4.9"/>
    </reaction>
</comment>
<comment type="pathway">
    <text evidence="1">One-carbon metabolism; tetrahydrofolate interconversion.</text>
</comment>
<comment type="subunit">
    <text evidence="1">Homodimer.</text>
</comment>
<comment type="similarity">
    <text evidence="1">Belongs to the tetrahydrofolate dehydrogenase/cyclohydrolase family.</text>
</comment>
<name>FOLD_ACTP7</name>
<evidence type="ECO:0000255" key="1">
    <source>
        <dbReference type="HAMAP-Rule" id="MF_01576"/>
    </source>
</evidence>
<dbReference type="EC" id="1.5.1.5" evidence="1"/>
<dbReference type="EC" id="3.5.4.9" evidence="1"/>
<dbReference type="EMBL" id="CP001091">
    <property type="protein sequence ID" value="ACE61608.1"/>
    <property type="molecule type" value="Genomic_DNA"/>
</dbReference>
<dbReference type="RefSeq" id="WP_005597425.1">
    <property type="nucleotide sequence ID" value="NC_010939.1"/>
</dbReference>
<dbReference type="SMR" id="B3GXP3"/>
<dbReference type="GeneID" id="48599085"/>
<dbReference type="KEGG" id="apa:APP7_0956"/>
<dbReference type="HOGENOM" id="CLU_034045_2_1_6"/>
<dbReference type="UniPathway" id="UPA00193"/>
<dbReference type="Proteomes" id="UP000001226">
    <property type="component" value="Chromosome"/>
</dbReference>
<dbReference type="GO" id="GO:0005829">
    <property type="term" value="C:cytosol"/>
    <property type="evidence" value="ECO:0007669"/>
    <property type="project" value="TreeGrafter"/>
</dbReference>
<dbReference type="GO" id="GO:0004477">
    <property type="term" value="F:methenyltetrahydrofolate cyclohydrolase activity"/>
    <property type="evidence" value="ECO:0007669"/>
    <property type="project" value="UniProtKB-UniRule"/>
</dbReference>
<dbReference type="GO" id="GO:0004488">
    <property type="term" value="F:methylenetetrahydrofolate dehydrogenase (NADP+) activity"/>
    <property type="evidence" value="ECO:0007669"/>
    <property type="project" value="UniProtKB-UniRule"/>
</dbReference>
<dbReference type="GO" id="GO:0000105">
    <property type="term" value="P:L-histidine biosynthetic process"/>
    <property type="evidence" value="ECO:0007669"/>
    <property type="project" value="UniProtKB-KW"/>
</dbReference>
<dbReference type="GO" id="GO:0009086">
    <property type="term" value="P:methionine biosynthetic process"/>
    <property type="evidence" value="ECO:0007669"/>
    <property type="project" value="UniProtKB-KW"/>
</dbReference>
<dbReference type="GO" id="GO:0006164">
    <property type="term" value="P:purine nucleotide biosynthetic process"/>
    <property type="evidence" value="ECO:0007669"/>
    <property type="project" value="UniProtKB-KW"/>
</dbReference>
<dbReference type="GO" id="GO:0035999">
    <property type="term" value="P:tetrahydrofolate interconversion"/>
    <property type="evidence" value="ECO:0007669"/>
    <property type="project" value="UniProtKB-UniRule"/>
</dbReference>
<dbReference type="CDD" id="cd01080">
    <property type="entry name" value="NAD_bind_m-THF_DH_Cyclohyd"/>
    <property type="match status" value="1"/>
</dbReference>
<dbReference type="FunFam" id="3.40.50.10860:FF:000001">
    <property type="entry name" value="Bifunctional protein FolD"/>
    <property type="match status" value="1"/>
</dbReference>
<dbReference type="FunFam" id="3.40.50.720:FF:000006">
    <property type="entry name" value="Bifunctional protein FolD"/>
    <property type="match status" value="1"/>
</dbReference>
<dbReference type="Gene3D" id="3.40.50.10860">
    <property type="entry name" value="Leucine Dehydrogenase, chain A, domain 1"/>
    <property type="match status" value="1"/>
</dbReference>
<dbReference type="Gene3D" id="3.40.50.720">
    <property type="entry name" value="NAD(P)-binding Rossmann-like Domain"/>
    <property type="match status" value="1"/>
</dbReference>
<dbReference type="HAMAP" id="MF_01576">
    <property type="entry name" value="THF_DHG_CYH"/>
    <property type="match status" value="1"/>
</dbReference>
<dbReference type="InterPro" id="IPR046346">
    <property type="entry name" value="Aminoacid_DH-like_N_sf"/>
</dbReference>
<dbReference type="InterPro" id="IPR036291">
    <property type="entry name" value="NAD(P)-bd_dom_sf"/>
</dbReference>
<dbReference type="InterPro" id="IPR000672">
    <property type="entry name" value="THF_DH/CycHdrlase"/>
</dbReference>
<dbReference type="InterPro" id="IPR020630">
    <property type="entry name" value="THF_DH/CycHdrlase_cat_dom"/>
</dbReference>
<dbReference type="InterPro" id="IPR020867">
    <property type="entry name" value="THF_DH/CycHdrlase_CS"/>
</dbReference>
<dbReference type="InterPro" id="IPR020631">
    <property type="entry name" value="THF_DH/CycHdrlase_NAD-bd_dom"/>
</dbReference>
<dbReference type="NCBIfam" id="NF008058">
    <property type="entry name" value="PRK10792.1"/>
    <property type="match status" value="1"/>
</dbReference>
<dbReference type="NCBIfam" id="NF010783">
    <property type="entry name" value="PRK14186.1"/>
    <property type="match status" value="1"/>
</dbReference>
<dbReference type="PANTHER" id="PTHR48099:SF5">
    <property type="entry name" value="C-1-TETRAHYDROFOLATE SYNTHASE, CYTOPLASMIC"/>
    <property type="match status" value="1"/>
</dbReference>
<dbReference type="PANTHER" id="PTHR48099">
    <property type="entry name" value="C-1-TETRAHYDROFOLATE SYNTHASE, CYTOPLASMIC-RELATED"/>
    <property type="match status" value="1"/>
</dbReference>
<dbReference type="Pfam" id="PF00763">
    <property type="entry name" value="THF_DHG_CYH"/>
    <property type="match status" value="1"/>
</dbReference>
<dbReference type="Pfam" id="PF02882">
    <property type="entry name" value="THF_DHG_CYH_C"/>
    <property type="match status" value="1"/>
</dbReference>
<dbReference type="PRINTS" id="PR00085">
    <property type="entry name" value="THFDHDRGNASE"/>
</dbReference>
<dbReference type="SUPFAM" id="SSF53223">
    <property type="entry name" value="Aminoacid dehydrogenase-like, N-terminal domain"/>
    <property type="match status" value="1"/>
</dbReference>
<dbReference type="SUPFAM" id="SSF51735">
    <property type="entry name" value="NAD(P)-binding Rossmann-fold domains"/>
    <property type="match status" value="1"/>
</dbReference>
<dbReference type="PROSITE" id="PS00766">
    <property type="entry name" value="THF_DHG_CYH_1"/>
    <property type="match status" value="1"/>
</dbReference>
<dbReference type="PROSITE" id="PS00767">
    <property type="entry name" value="THF_DHG_CYH_2"/>
    <property type="match status" value="1"/>
</dbReference>
<reference key="1">
    <citation type="submission" date="2008-06" db="EMBL/GenBank/DDBJ databases">
        <title>Genome and proteome analysis of A. pleuropneumoniae serotype 7.</title>
        <authorList>
            <person name="Linke B."/>
            <person name="Buettner F."/>
            <person name="Martinez-Arias R."/>
            <person name="Goesmann A."/>
            <person name="Baltes N."/>
            <person name="Tegetmeyer H."/>
            <person name="Singh M."/>
            <person name="Gerlach G.F."/>
        </authorList>
    </citation>
    <scope>NUCLEOTIDE SEQUENCE [LARGE SCALE GENOMIC DNA]</scope>
    <source>
        <strain>AP76</strain>
    </source>
</reference>
<feature type="chain" id="PRO_1000196746" description="Bifunctional protein FolD">
    <location>
        <begin position="1"/>
        <end position="285"/>
    </location>
</feature>
<feature type="binding site" evidence="1">
    <location>
        <begin position="166"/>
        <end position="168"/>
    </location>
    <ligand>
        <name>NADP(+)</name>
        <dbReference type="ChEBI" id="CHEBI:58349"/>
    </ligand>
</feature>
<feature type="binding site" evidence="1">
    <location>
        <position position="191"/>
    </location>
    <ligand>
        <name>NADP(+)</name>
        <dbReference type="ChEBI" id="CHEBI:58349"/>
    </ligand>
</feature>
<feature type="binding site" evidence="1">
    <location>
        <position position="232"/>
    </location>
    <ligand>
        <name>NADP(+)</name>
        <dbReference type="ChEBI" id="CHEBI:58349"/>
    </ligand>
</feature>